<evidence type="ECO:0000250" key="1"/>
<evidence type="ECO:0000250" key="2">
    <source>
        <dbReference type="UniProtKB" id="P09871"/>
    </source>
</evidence>
<evidence type="ECO:0000255" key="3"/>
<evidence type="ECO:0000255" key="4">
    <source>
        <dbReference type="PROSITE-ProRule" id="PRU00059"/>
    </source>
</evidence>
<evidence type="ECO:0000255" key="5">
    <source>
        <dbReference type="PROSITE-ProRule" id="PRU00076"/>
    </source>
</evidence>
<evidence type="ECO:0000255" key="6">
    <source>
        <dbReference type="PROSITE-ProRule" id="PRU00274"/>
    </source>
</evidence>
<evidence type="ECO:0000255" key="7">
    <source>
        <dbReference type="PROSITE-ProRule" id="PRU00302"/>
    </source>
</evidence>
<keyword id="KW-0106">Calcium</keyword>
<keyword id="KW-0180">Complement pathway</keyword>
<keyword id="KW-1015">Disulfide bond</keyword>
<keyword id="KW-0245">EGF-like domain</keyword>
<keyword id="KW-0325">Glycoprotein</keyword>
<keyword id="KW-0378">Hydrolase</keyword>
<keyword id="KW-0379">Hydroxylation</keyword>
<keyword id="KW-0391">Immunity</keyword>
<keyword id="KW-0399">Innate immunity</keyword>
<keyword id="KW-0479">Metal-binding</keyword>
<keyword id="KW-0645">Protease</keyword>
<keyword id="KW-1185">Reference proteome</keyword>
<keyword id="KW-0677">Repeat</keyword>
<keyword id="KW-0720">Serine protease</keyword>
<keyword id="KW-0732">Signal</keyword>
<keyword id="KW-0768">Sushi</keyword>
<protein>
    <recommendedName>
        <fullName>Complement C1s subcomponent</fullName>
        <ecNumber>3.4.21.42</ecNumber>
    </recommendedName>
    <alternativeName>
        <fullName>C1 esterase</fullName>
    </alternativeName>
    <alternativeName>
        <fullName>Complement component 1 subcomponent s</fullName>
    </alternativeName>
    <component>
        <recommendedName>
            <fullName>Complement C1s subcomponent heavy chain</fullName>
        </recommendedName>
    </component>
    <component>
        <recommendedName>
            <fullName>Complement C1s subcomponent light chain</fullName>
        </recommendedName>
    </component>
</protein>
<name>C1S_PIG</name>
<comment type="function">
    <text evidence="2">C1s B chain is a serine protease that combines with C1q and C1r to form C1, the first component of the classical pathway of the complement system. C1r activates C1s so that it can, in turn, activate C2 and C4 (By similarity). Also cleaves IGFBP5 and thereby inhibits the trophic effects of IGF1.</text>
</comment>
<comment type="catalytic activity">
    <reaction>
        <text>Cleavage of Arg-|-Ala bond in complement component C4 to form C4a and C4b, and Lys(or Arg)-|-Lys bond in complement component C2 to form C2a and C2b: the 'classical' pathway C3 convertase.</text>
        <dbReference type="EC" id="3.4.21.42"/>
    </reaction>
</comment>
<comment type="activity regulation">
    <text evidence="1">Inhibited by SERPING1.</text>
</comment>
<comment type="subunit">
    <text evidence="1">C1 is a calcium-dependent trimolecular complex of C1q, C1r and C1s in the molar ration of 1:2:2. Activated C1s is an disulfide-linked heterodimer of a heavy chain and a light chain (By similarity).</text>
</comment>
<comment type="PTM">
    <text evidence="1">The iron and 2-oxoglutarate dependent 3-hydroxylation of aspartate and asparagine is (R) stereospecific within EGF domains.</text>
</comment>
<comment type="similarity">
    <text evidence="6">Belongs to the peptidase S1 family.</text>
</comment>
<organism>
    <name type="scientific">Sus scrofa</name>
    <name type="common">Pig</name>
    <dbReference type="NCBI Taxonomy" id="9823"/>
    <lineage>
        <taxon>Eukaryota</taxon>
        <taxon>Metazoa</taxon>
        <taxon>Chordata</taxon>
        <taxon>Craniata</taxon>
        <taxon>Vertebrata</taxon>
        <taxon>Euteleostomi</taxon>
        <taxon>Mammalia</taxon>
        <taxon>Eutheria</taxon>
        <taxon>Laurasiatheria</taxon>
        <taxon>Artiodactyla</taxon>
        <taxon>Suina</taxon>
        <taxon>Suidae</taxon>
        <taxon>Sus</taxon>
    </lineage>
</organism>
<proteinExistence type="evidence at transcript level"/>
<dbReference type="EC" id="3.4.21.42"/>
<dbReference type="EMBL" id="AY349426">
    <property type="protein sequence ID" value="AAR20894.1"/>
    <property type="molecule type" value="mRNA"/>
</dbReference>
<dbReference type="RefSeq" id="NP_001005349.1">
    <property type="nucleotide sequence ID" value="NM_001005349.1"/>
</dbReference>
<dbReference type="SMR" id="Q69DK8"/>
<dbReference type="FunCoup" id="Q69DK8">
    <property type="interactions" value="121"/>
</dbReference>
<dbReference type="MEROPS" id="S01.193"/>
<dbReference type="GlyGen" id="Q69DK8">
    <property type="glycosylation" value="3 sites"/>
</dbReference>
<dbReference type="PeptideAtlas" id="Q69DK8"/>
<dbReference type="GeneID" id="397274"/>
<dbReference type="KEGG" id="ssc:397274"/>
<dbReference type="CTD" id="716"/>
<dbReference type="InParanoid" id="Q69DK8"/>
<dbReference type="OrthoDB" id="9985152at2759"/>
<dbReference type="Proteomes" id="UP000008227">
    <property type="component" value="Unplaced"/>
</dbReference>
<dbReference type="Proteomes" id="UP000314985">
    <property type="component" value="Unplaced"/>
</dbReference>
<dbReference type="Proteomes" id="UP000694570">
    <property type="component" value="Unplaced"/>
</dbReference>
<dbReference type="Proteomes" id="UP000694571">
    <property type="component" value="Unplaced"/>
</dbReference>
<dbReference type="Proteomes" id="UP000694720">
    <property type="component" value="Unplaced"/>
</dbReference>
<dbReference type="Proteomes" id="UP000694722">
    <property type="component" value="Unplaced"/>
</dbReference>
<dbReference type="Proteomes" id="UP000694723">
    <property type="component" value="Unplaced"/>
</dbReference>
<dbReference type="Proteomes" id="UP000694724">
    <property type="component" value="Unplaced"/>
</dbReference>
<dbReference type="Proteomes" id="UP000694725">
    <property type="component" value="Unplaced"/>
</dbReference>
<dbReference type="Proteomes" id="UP000694726">
    <property type="component" value="Unplaced"/>
</dbReference>
<dbReference type="Proteomes" id="UP000694727">
    <property type="component" value="Unplaced"/>
</dbReference>
<dbReference type="Proteomes" id="UP000694728">
    <property type="component" value="Unplaced"/>
</dbReference>
<dbReference type="GO" id="GO:0005615">
    <property type="term" value="C:extracellular space"/>
    <property type="evidence" value="ECO:0000318"/>
    <property type="project" value="GO_Central"/>
</dbReference>
<dbReference type="GO" id="GO:0005509">
    <property type="term" value="F:calcium ion binding"/>
    <property type="evidence" value="ECO:0007669"/>
    <property type="project" value="InterPro"/>
</dbReference>
<dbReference type="GO" id="GO:0004252">
    <property type="term" value="F:serine-type endopeptidase activity"/>
    <property type="evidence" value="ECO:0000318"/>
    <property type="project" value="GO_Central"/>
</dbReference>
<dbReference type="GO" id="GO:0006958">
    <property type="term" value="P:complement activation, classical pathway"/>
    <property type="evidence" value="ECO:0007669"/>
    <property type="project" value="UniProtKB-KW"/>
</dbReference>
<dbReference type="GO" id="GO:0045087">
    <property type="term" value="P:innate immune response"/>
    <property type="evidence" value="ECO:0007669"/>
    <property type="project" value="UniProtKB-KW"/>
</dbReference>
<dbReference type="GO" id="GO:0006508">
    <property type="term" value="P:proteolysis"/>
    <property type="evidence" value="ECO:0007669"/>
    <property type="project" value="UniProtKB-KW"/>
</dbReference>
<dbReference type="CDD" id="cd00033">
    <property type="entry name" value="CCP"/>
    <property type="match status" value="2"/>
</dbReference>
<dbReference type="CDD" id="cd00041">
    <property type="entry name" value="CUB"/>
    <property type="match status" value="2"/>
</dbReference>
<dbReference type="CDD" id="cd00054">
    <property type="entry name" value="EGF_CA"/>
    <property type="match status" value="1"/>
</dbReference>
<dbReference type="CDD" id="cd00190">
    <property type="entry name" value="Tryp_SPc"/>
    <property type="match status" value="1"/>
</dbReference>
<dbReference type="FunFam" id="2.10.70.10:FF:000049">
    <property type="entry name" value="Complement C1s subcomponent"/>
    <property type="match status" value="1"/>
</dbReference>
<dbReference type="FunFam" id="2.40.10.10:FF:000059">
    <property type="entry name" value="Complement C1s subcomponent"/>
    <property type="match status" value="1"/>
</dbReference>
<dbReference type="FunFam" id="2.40.10.10:FF:000067">
    <property type="entry name" value="Complement C1s subcomponent"/>
    <property type="match status" value="1"/>
</dbReference>
<dbReference type="FunFam" id="2.60.120.290:FF:000034">
    <property type="entry name" value="complement C1s subcomponent"/>
    <property type="match status" value="1"/>
</dbReference>
<dbReference type="FunFam" id="2.10.25.10:FF:000059">
    <property type="entry name" value="Mannan-binding lectin serine protease 1"/>
    <property type="match status" value="1"/>
</dbReference>
<dbReference type="FunFam" id="2.10.70.10:FF:000016">
    <property type="entry name" value="Mannan-binding lectin serine protease 1"/>
    <property type="match status" value="1"/>
</dbReference>
<dbReference type="FunFam" id="2.60.120.290:FF:000006">
    <property type="entry name" value="Mannan-binding lectin serine protease 1"/>
    <property type="match status" value="1"/>
</dbReference>
<dbReference type="Gene3D" id="2.10.70.10">
    <property type="entry name" value="Complement Module, domain 1"/>
    <property type="match status" value="2"/>
</dbReference>
<dbReference type="Gene3D" id="2.10.25.10">
    <property type="entry name" value="Laminin"/>
    <property type="match status" value="1"/>
</dbReference>
<dbReference type="Gene3D" id="2.60.120.290">
    <property type="entry name" value="Spermadhesin, CUB domain"/>
    <property type="match status" value="2"/>
</dbReference>
<dbReference type="Gene3D" id="2.40.10.10">
    <property type="entry name" value="Trypsin-like serine proteases"/>
    <property type="match status" value="2"/>
</dbReference>
<dbReference type="InterPro" id="IPR000859">
    <property type="entry name" value="CUB_dom"/>
</dbReference>
<dbReference type="InterPro" id="IPR001881">
    <property type="entry name" value="EGF-like_Ca-bd_dom"/>
</dbReference>
<dbReference type="InterPro" id="IPR000742">
    <property type="entry name" value="EGF-like_dom"/>
</dbReference>
<dbReference type="InterPro" id="IPR000152">
    <property type="entry name" value="EGF-type_Asp/Asn_hydroxyl_site"/>
</dbReference>
<dbReference type="InterPro" id="IPR018097">
    <property type="entry name" value="EGF_Ca-bd_CS"/>
</dbReference>
<dbReference type="InterPro" id="IPR024175">
    <property type="entry name" value="Pept_S1A_C1r/C1S/mannan-bd"/>
</dbReference>
<dbReference type="InterPro" id="IPR009003">
    <property type="entry name" value="Peptidase_S1_PA"/>
</dbReference>
<dbReference type="InterPro" id="IPR043504">
    <property type="entry name" value="Peptidase_S1_PA_chymotrypsin"/>
</dbReference>
<dbReference type="InterPro" id="IPR001314">
    <property type="entry name" value="Peptidase_S1A"/>
</dbReference>
<dbReference type="InterPro" id="IPR035914">
    <property type="entry name" value="Sperma_CUB_dom_sf"/>
</dbReference>
<dbReference type="InterPro" id="IPR035976">
    <property type="entry name" value="Sushi/SCR/CCP_sf"/>
</dbReference>
<dbReference type="InterPro" id="IPR000436">
    <property type="entry name" value="Sushi_SCR_CCP_dom"/>
</dbReference>
<dbReference type="InterPro" id="IPR001254">
    <property type="entry name" value="Trypsin_dom"/>
</dbReference>
<dbReference type="InterPro" id="IPR033116">
    <property type="entry name" value="TRYPSIN_SER"/>
</dbReference>
<dbReference type="PANTHER" id="PTHR24255:SF18">
    <property type="entry name" value="COMPLEMENT C1S SUBCOMPONENT"/>
    <property type="match status" value="1"/>
</dbReference>
<dbReference type="PANTHER" id="PTHR24255">
    <property type="entry name" value="COMPLEMENT COMPONENT 1, S SUBCOMPONENT-RELATED"/>
    <property type="match status" value="1"/>
</dbReference>
<dbReference type="Pfam" id="PF00431">
    <property type="entry name" value="CUB"/>
    <property type="match status" value="2"/>
</dbReference>
<dbReference type="Pfam" id="PF14670">
    <property type="entry name" value="FXa_inhibition"/>
    <property type="match status" value="1"/>
</dbReference>
<dbReference type="Pfam" id="PF00084">
    <property type="entry name" value="Sushi"/>
    <property type="match status" value="2"/>
</dbReference>
<dbReference type="Pfam" id="PF00089">
    <property type="entry name" value="Trypsin"/>
    <property type="match status" value="1"/>
</dbReference>
<dbReference type="PIRSF" id="PIRSF001155">
    <property type="entry name" value="C1r_C1s_MASP"/>
    <property type="match status" value="1"/>
</dbReference>
<dbReference type="PRINTS" id="PR00722">
    <property type="entry name" value="CHYMOTRYPSIN"/>
</dbReference>
<dbReference type="SMART" id="SM00032">
    <property type="entry name" value="CCP"/>
    <property type="match status" value="2"/>
</dbReference>
<dbReference type="SMART" id="SM00042">
    <property type="entry name" value="CUB"/>
    <property type="match status" value="2"/>
</dbReference>
<dbReference type="SMART" id="SM00179">
    <property type="entry name" value="EGF_CA"/>
    <property type="match status" value="1"/>
</dbReference>
<dbReference type="SMART" id="SM00020">
    <property type="entry name" value="Tryp_SPc"/>
    <property type="match status" value="1"/>
</dbReference>
<dbReference type="SUPFAM" id="SSF57535">
    <property type="entry name" value="Complement control module/SCR domain"/>
    <property type="match status" value="2"/>
</dbReference>
<dbReference type="SUPFAM" id="SSF57196">
    <property type="entry name" value="EGF/Laminin"/>
    <property type="match status" value="1"/>
</dbReference>
<dbReference type="SUPFAM" id="SSF49854">
    <property type="entry name" value="Spermadhesin, CUB domain"/>
    <property type="match status" value="2"/>
</dbReference>
<dbReference type="SUPFAM" id="SSF50494">
    <property type="entry name" value="Trypsin-like serine proteases"/>
    <property type="match status" value="1"/>
</dbReference>
<dbReference type="PROSITE" id="PS00010">
    <property type="entry name" value="ASX_HYDROXYL"/>
    <property type="match status" value="1"/>
</dbReference>
<dbReference type="PROSITE" id="PS01180">
    <property type="entry name" value="CUB"/>
    <property type="match status" value="2"/>
</dbReference>
<dbReference type="PROSITE" id="PS50026">
    <property type="entry name" value="EGF_3"/>
    <property type="match status" value="1"/>
</dbReference>
<dbReference type="PROSITE" id="PS01187">
    <property type="entry name" value="EGF_CA"/>
    <property type="match status" value="1"/>
</dbReference>
<dbReference type="PROSITE" id="PS50923">
    <property type="entry name" value="SUSHI"/>
    <property type="match status" value="2"/>
</dbReference>
<dbReference type="PROSITE" id="PS50240">
    <property type="entry name" value="TRYPSIN_DOM"/>
    <property type="match status" value="1"/>
</dbReference>
<dbReference type="PROSITE" id="PS00135">
    <property type="entry name" value="TRYPSIN_SER"/>
    <property type="match status" value="1"/>
</dbReference>
<reference key="1">
    <citation type="submission" date="2003-07" db="EMBL/GenBank/DDBJ databases">
        <title>Molecular analysis of soluble porcine complement component genes.</title>
        <authorList>
            <person name="Trakooljul N."/>
            <person name="Ponsuksili S."/>
            <person name="Schellander K."/>
            <person name="Wimmers K."/>
        </authorList>
    </citation>
    <scope>NUCLEOTIDE SEQUENCE [MRNA]</scope>
</reference>
<accession>Q69DK8</accession>
<sequence length="687" mass="76101">MWCIVLLSLLAWVDAEPTMYGEILSPNYPQAYPNEVEKSWDIEVPEGYGIHLYFTHLDIELSENCAYDSVQIKSGGREEGKLCGQKTSKNPKSAVVEEFQVPYNKLQVIFTSDFSNEERFTGFAAYYVAVDVNECTDFADSPCSHFCNNYIGGYFCSCPPEYFLHEDKKNCGVNCSGDVFTTLIGEVASPNYPNPYPENSRCDYQILLEEGFQVVVTMRREDFDVEPADSGGHCPDSLIFVAGNQQFGPYCGNGFPGPLTIETKSNALNIIFQTDETEQKKGWKFRYHGDPIPCPKEVTANSFWEPEKAKYVFKDVVKITCLDGFEVVQGTVGSTSFYSTCQSNGKWSNSKLRCQPVDCGSPEPIPHGKVEDPEHTLFGSVTRYSCEQPYYYMETDGSEEYRCAGNGSWVNELLGAELPKCVPVCGIPSEPFKGMQRIFGGIITKIESFPWQVFFQNPRAGGALIDEQWVLTAAHVVEGNREPVMYVGSSSVVTSHLANGQMLTAERVFIHPGWEEQDASERKNFDNDIALVRLKDPVKMGPTVSPICLPGTSSDYDPSVGDLGLISGWGRTNTKDHVVKLRGAKLPVAPSDKCQEIKGTNPRIGTSSFVFTDNMICAGGRGVDSCNGDSGGAFAMQVPNEETPKFYVAGLVSWGPQCGTYGIYTRVKNYIDWIRETMQQNSAPSVD</sequence>
<feature type="signal peptide" evidence="1">
    <location>
        <begin position="1"/>
        <end position="15"/>
    </location>
</feature>
<feature type="chain" id="PRO_0000042199" description="Complement C1s subcomponent">
    <location>
        <begin position="16"/>
        <end position="687"/>
    </location>
</feature>
<feature type="chain" id="PRO_0000042200" description="Complement C1s subcomponent heavy chain" evidence="1">
    <location>
        <begin position="16"/>
        <end position="437"/>
    </location>
</feature>
<feature type="chain" id="PRO_0000042201" description="Complement C1s subcomponent light chain" evidence="1">
    <location>
        <begin position="438"/>
        <end position="687"/>
    </location>
</feature>
<feature type="domain" description="CUB 1" evidence="4">
    <location>
        <begin position="16"/>
        <end position="130"/>
    </location>
</feature>
<feature type="domain" description="EGF-like; calcium-binding" evidence="5">
    <location>
        <begin position="131"/>
        <end position="172"/>
    </location>
</feature>
<feature type="domain" description="CUB 2" evidence="4">
    <location>
        <begin position="175"/>
        <end position="290"/>
    </location>
</feature>
<feature type="domain" description="Sushi 1" evidence="7">
    <location>
        <begin position="292"/>
        <end position="356"/>
    </location>
</feature>
<feature type="domain" description="Sushi 2" evidence="7">
    <location>
        <begin position="357"/>
        <end position="423"/>
    </location>
</feature>
<feature type="domain" description="Peptidase S1" evidence="6">
    <location>
        <begin position="438"/>
        <end position="679"/>
    </location>
</feature>
<feature type="active site" description="Charge relay system" evidence="1">
    <location>
        <position position="475"/>
    </location>
</feature>
<feature type="active site" description="Charge relay system" evidence="1">
    <location>
        <position position="528"/>
    </location>
</feature>
<feature type="active site" description="Charge relay system" evidence="1">
    <location>
        <position position="630"/>
    </location>
</feature>
<feature type="binding site" evidence="1">
    <location>
        <position position="60"/>
    </location>
    <ligand>
        <name>Ca(2+)</name>
        <dbReference type="ChEBI" id="CHEBI:29108"/>
    </ligand>
</feature>
<feature type="binding site" evidence="1">
    <location>
        <position position="68"/>
    </location>
    <ligand>
        <name>Ca(2+)</name>
        <dbReference type="ChEBI" id="CHEBI:29108"/>
    </ligand>
</feature>
<feature type="binding site" evidence="1">
    <location>
        <position position="113"/>
    </location>
    <ligand>
        <name>Ca(2+)</name>
        <dbReference type="ChEBI" id="CHEBI:29108"/>
    </ligand>
</feature>
<feature type="binding site" evidence="1">
    <location>
        <position position="131"/>
    </location>
    <ligand>
        <name>Ca(2+)</name>
        <dbReference type="ChEBI" id="CHEBI:29108"/>
    </ligand>
</feature>
<feature type="binding site" evidence="1">
    <location>
        <position position="132"/>
    </location>
    <ligand>
        <name>Ca(2+)</name>
        <dbReference type="ChEBI" id="CHEBI:29108"/>
    </ligand>
</feature>
<feature type="binding site" evidence="1">
    <location>
        <position position="134"/>
    </location>
    <ligand>
        <name>Ca(2+)</name>
        <dbReference type="ChEBI" id="CHEBI:29108"/>
    </ligand>
</feature>
<feature type="binding site" evidence="1">
    <location>
        <position position="149"/>
    </location>
    <ligand>
        <name>Ca(2+)</name>
        <dbReference type="ChEBI" id="CHEBI:29108"/>
    </ligand>
</feature>
<feature type="binding site" evidence="1">
    <location>
        <position position="150"/>
    </location>
    <ligand>
        <name>Ca(2+)</name>
        <dbReference type="ChEBI" id="CHEBI:29108"/>
    </ligand>
</feature>
<feature type="binding site" evidence="1">
    <location>
        <position position="153"/>
    </location>
    <ligand>
        <name>Ca(2+)</name>
        <dbReference type="ChEBI" id="CHEBI:29108"/>
    </ligand>
</feature>
<feature type="modified residue" description="(3R)-3-hydroxyasparagine" evidence="1">
    <location>
        <position position="149"/>
    </location>
</feature>
<feature type="glycosylation site" description="N-linked (GlcNAc...) asparagine" evidence="3">
    <location>
        <position position="174"/>
    </location>
</feature>
<feature type="glycosylation site" description="N-linked (GlcNAc...) asparagine" evidence="3">
    <location>
        <position position="406"/>
    </location>
</feature>
<feature type="disulfide bond" evidence="1">
    <location>
        <begin position="65"/>
        <end position="83"/>
    </location>
</feature>
<feature type="disulfide bond" evidence="1">
    <location>
        <begin position="135"/>
        <end position="147"/>
    </location>
</feature>
<feature type="disulfide bond" evidence="1">
    <location>
        <begin position="143"/>
        <end position="156"/>
    </location>
</feature>
<feature type="disulfide bond" evidence="1">
    <location>
        <begin position="158"/>
        <end position="171"/>
    </location>
</feature>
<feature type="disulfide bond" evidence="1">
    <location>
        <begin position="175"/>
        <end position="202"/>
    </location>
</feature>
<feature type="disulfide bond" evidence="1">
    <location>
        <begin position="234"/>
        <end position="251"/>
    </location>
</feature>
<feature type="disulfide bond" evidence="1">
    <location>
        <begin position="294"/>
        <end position="341"/>
    </location>
</feature>
<feature type="disulfide bond" evidence="1">
    <location>
        <begin position="321"/>
        <end position="354"/>
    </location>
</feature>
<feature type="disulfide bond" evidence="1">
    <location>
        <begin position="359"/>
        <end position="403"/>
    </location>
</feature>
<feature type="disulfide bond" evidence="1">
    <location>
        <begin position="386"/>
        <end position="421"/>
    </location>
</feature>
<feature type="disulfide bond" description="Interchain (between heavy and light chains)" evidence="4 5 6 7">
    <location>
        <begin position="425"/>
        <end position="548"/>
    </location>
</feature>
<feature type="disulfide bond" evidence="1">
    <location>
        <begin position="594"/>
        <end position="617"/>
    </location>
</feature>
<feature type="disulfide bond" evidence="1">
    <location>
        <begin position="626"/>
        <end position="658"/>
    </location>
</feature>